<reference key="1">
    <citation type="journal article" date="2006" name="Lancet">
        <title>Complete genome sequence of USA300, an epidemic clone of community-acquired meticillin-resistant Staphylococcus aureus.</title>
        <authorList>
            <person name="Diep B.A."/>
            <person name="Gill S.R."/>
            <person name="Chang R.F."/>
            <person name="Phan T.H."/>
            <person name="Chen J.H."/>
            <person name="Davidson M.G."/>
            <person name="Lin F."/>
            <person name="Lin J."/>
            <person name="Carleton H.A."/>
            <person name="Mongodin E.F."/>
            <person name="Sensabaugh G.F."/>
            <person name="Perdreau-Remington F."/>
        </authorList>
    </citation>
    <scope>NUCLEOTIDE SEQUENCE [LARGE SCALE GENOMIC DNA]</scope>
    <source>
        <strain>USA300</strain>
    </source>
</reference>
<dbReference type="EMBL" id="CP000255">
    <property type="protein sequence ID" value="ABD21927.1"/>
    <property type="molecule type" value="Genomic_DNA"/>
</dbReference>
<dbReference type="RefSeq" id="WP_000670752.1">
    <property type="nucleotide sequence ID" value="NZ_CP027476.1"/>
</dbReference>
<dbReference type="SMR" id="Q2FIA7"/>
<dbReference type="KEGG" id="saa:SAUSA300_0871"/>
<dbReference type="HOGENOM" id="CLU_028458_3_1_9"/>
<dbReference type="OMA" id="NCRKVIC"/>
<dbReference type="Proteomes" id="UP000001939">
    <property type="component" value="Chromosome"/>
</dbReference>
<dbReference type="GO" id="GO:0018773">
    <property type="term" value="F:acetylpyruvate hydrolase activity"/>
    <property type="evidence" value="ECO:0007669"/>
    <property type="project" value="TreeGrafter"/>
</dbReference>
<dbReference type="GO" id="GO:0046872">
    <property type="term" value="F:metal ion binding"/>
    <property type="evidence" value="ECO:0007669"/>
    <property type="project" value="UniProtKB-KW"/>
</dbReference>
<dbReference type="FunFam" id="3.90.850.10:FF:000010">
    <property type="entry name" value="FAA hydrolase family protein"/>
    <property type="match status" value="1"/>
</dbReference>
<dbReference type="Gene3D" id="3.90.850.10">
    <property type="entry name" value="Fumarylacetoacetase-like, C-terminal domain"/>
    <property type="match status" value="1"/>
</dbReference>
<dbReference type="InterPro" id="IPR011234">
    <property type="entry name" value="Fumarylacetoacetase-like_C"/>
</dbReference>
<dbReference type="InterPro" id="IPR036663">
    <property type="entry name" value="Fumarylacetoacetase_C_sf"/>
</dbReference>
<dbReference type="PANTHER" id="PTHR11820">
    <property type="entry name" value="ACYLPYRUVASE"/>
    <property type="match status" value="1"/>
</dbReference>
<dbReference type="PANTHER" id="PTHR11820:SF7">
    <property type="entry name" value="ACYLPYRUVASE FAHD1, MITOCHONDRIAL"/>
    <property type="match status" value="1"/>
</dbReference>
<dbReference type="Pfam" id="PF01557">
    <property type="entry name" value="FAA_hydrolase"/>
    <property type="match status" value="1"/>
</dbReference>
<dbReference type="SUPFAM" id="SSF56529">
    <property type="entry name" value="FAH"/>
    <property type="match status" value="1"/>
</dbReference>
<protein>
    <recommendedName>
        <fullName>Uncharacterized protein SAUSA300_0871</fullName>
    </recommendedName>
</protein>
<proteinExistence type="inferred from homology"/>
<evidence type="ECO:0000250" key="1"/>
<evidence type="ECO:0000305" key="2"/>
<accession>Q2FIA7</accession>
<keyword id="KW-0479">Metal-binding</keyword>
<sequence>MKFLSFKYNDKTSYGVKVKREDAVWDLTQVFADFAEGDFHPKTLLAGLQQNHTLDFQEQVRKAVVAAEDSGKAEDYKISFNDIEFLPPVTPPNNVIAFGRNYKDHANELNHEVEKLYVFTKAASSLTGDNATIPNHKDITDQLDYEGELGIVIGKSGEKIPKALALDYVYGYTIINDITDRKAQSEQDQAFLSKSLTGGCPMGPYIVTKDELPLPENVNIVTKVNNEIRQDGNTGEMILKIDELIEEISKYVALHPGDIIATGTPAGVGAGMQPPKFLQPGDEVKVTIDNIGTLTTYIAK</sequence>
<name>Y871_STAA3</name>
<comment type="similarity">
    <text evidence="2">Belongs to the FAH family.</text>
</comment>
<gene>
    <name type="ordered locus">SAUSA300_0871</name>
</gene>
<feature type="chain" id="PRO_0000303225" description="Uncharacterized protein SAUSA300_0871">
    <location>
        <begin position="1"/>
        <end position="300"/>
    </location>
</feature>
<feature type="binding site" evidence="1">
    <location>
        <position position="146"/>
    </location>
    <ligand>
        <name>a divalent metal cation</name>
        <dbReference type="ChEBI" id="CHEBI:60240"/>
    </ligand>
</feature>
<feature type="binding site" evidence="1">
    <location>
        <position position="148"/>
    </location>
    <ligand>
        <name>a divalent metal cation</name>
        <dbReference type="ChEBI" id="CHEBI:60240"/>
    </ligand>
</feature>
<feature type="binding site" evidence="1">
    <location>
        <position position="177"/>
    </location>
    <ligand>
        <name>a divalent metal cation</name>
        <dbReference type="ChEBI" id="CHEBI:60240"/>
    </ligand>
</feature>
<organism>
    <name type="scientific">Staphylococcus aureus (strain USA300)</name>
    <dbReference type="NCBI Taxonomy" id="367830"/>
    <lineage>
        <taxon>Bacteria</taxon>
        <taxon>Bacillati</taxon>
        <taxon>Bacillota</taxon>
        <taxon>Bacilli</taxon>
        <taxon>Bacillales</taxon>
        <taxon>Staphylococcaceae</taxon>
        <taxon>Staphylococcus</taxon>
    </lineage>
</organism>